<accession>Q5WEP2</accession>
<protein>
    <recommendedName>
        <fullName evidence="1">Probable GTP-binding protein EngB</fullName>
    </recommendedName>
</protein>
<reference key="1">
    <citation type="submission" date="2003-10" db="EMBL/GenBank/DDBJ databases">
        <title>The complete genome sequence of the alkaliphilic Bacillus clausii KSM-K16.</title>
        <authorList>
            <person name="Takaki Y."/>
            <person name="Kageyama Y."/>
            <person name="Shimamura S."/>
            <person name="Suzuki H."/>
            <person name="Nishi S."/>
            <person name="Hatada Y."/>
            <person name="Kawai S."/>
            <person name="Ito S."/>
            <person name="Horikoshi K."/>
        </authorList>
    </citation>
    <scope>NUCLEOTIDE SEQUENCE [LARGE SCALE GENOMIC DNA]</scope>
    <source>
        <strain>KSM-K16</strain>
    </source>
</reference>
<proteinExistence type="inferred from homology"/>
<feature type="chain" id="PRO_0000266815" description="Probable GTP-binding protein EngB">
    <location>
        <begin position="1"/>
        <end position="197"/>
    </location>
</feature>
<feature type="domain" description="EngB-type G" evidence="1">
    <location>
        <begin position="22"/>
        <end position="195"/>
    </location>
</feature>
<feature type="binding site" evidence="1">
    <location>
        <begin position="30"/>
        <end position="37"/>
    </location>
    <ligand>
        <name>GTP</name>
        <dbReference type="ChEBI" id="CHEBI:37565"/>
    </ligand>
</feature>
<feature type="binding site" evidence="1">
    <location>
        <position position="37"/>
    </location>
    <ligand>
        <name>Mg(2+)</name>
        <dbReference type="ChEBI" id="CHEBI:18420"/>
    </ligand>
</feature>
<feature type="binding site" evidence="1">
    <location>
        <begin position="57"/>
        <end position="61"/>
    </location>
    <ligand>
        <name>GTP</name>
        <dbReference type="ChEBI" id="CHEBI:37565"/>
    </ligand>
</feature>
<feature type="binding site" evidence="1">
    <location>
        <position position="59"/>
    </location>
    <ligand>
        <name>Mg(2+)</name>
        <dbReference type="ChEBI" id="CHEBI:18420"/>
    </ligand>
</feature>
<feature type="binding site" evidence="1">
    <location>
        <begin position="75"/>
        <end position="78"/>
    </location>
    <ligand>
        <name>GTP</name>
        <dbReference type="ChEBI" id="CHEBI:37565"/>
    </ligand>
</feature>
<feature type="binding site" evidence="1">
    <location>
        <begin position="142"/>
        <end position="145"/>
    </location>
    <ligand>
        <name>GTP</name>
        <dbReference type="ChEBI" id="CHEBI:37565"/>
    </ligand>
</feature>
<feature type="binding site" evidence="1">
    <location>
        <begin position="174"/>
        <end position="176"/>
    </location>
    <ligand>
        <name>GTP</name>
        <dbReference type="ChEBI" id="CHEBI:37565"/>
    </ligand>
</feature>
<sequence length="197" mass="22310">MKVTKAELAHVAVKAEQYPKNQLPELALAGRSNVGKSSFINKMLNRKGLARTSGQPGKTQTLNFYEINERLYFVDVPGYGYAKVSKTERAAWGKMIETYLSEREELKAVLQLVDIRHRPSEDDQLMYNWMKHYGIPVILVATKADKIPKGKWQKQLTAIAKTLDKEASDPLLFFSSATGLGKDEAWRTILNHLKVTE</sequence>
<comment type="function">
    <text evidence="1">Necessary for normal cell division and for the maintenance of normal septation.</text>
</comment>
<comment type="cofactor">
    <cofactor evidence="1">
        <name>Mg(2+)</name>
        <dbReference type="ChEBI" id="CHEBI:18420"/>
    </cofactor>
</comment>
<comment type="similarity">
    <text evidence="1">Belongs to the TRAFAC class TrmE-Era-EngA-EngB-Septin-like GTPase superfamily. EngB GTPase family.</text>
</comment>
<name>ENGB_SHOC1</name>
<gene>
    <name evidence="1" type="primary">engB</name>
    <name type="ordered locus">ABC2633</name>
</gene>
<dbReference type="EMBL" id="AP006627">
    <property type="protein sequence ID" value="BAD65168.1"/>
    <property type="molecule type" value="Genomic_DNA"/>
</dbReference>
<dbReference type="SMR" id="Q5WEP2"/>
<dbReference type="STRING" id="66692.ABC2633"/>
<dbReference type="KEGG" id="bcl:ABC2633"/>
<dbReference type="eggNOG" id="COG0218">
    <property type="taxonomic scope" value="Bacteria"/>
</dbReference>
<dbReference type="HOGENOM" id="CLU_033732_3_0_9"/>
<dbReference type="OrthoDB" id="9804921at2"/>
<dbReference type="Proteomes" id="UP000001168">
    <property type="component" value="Chromosome"/>
</dbReference>
<dbReference type="GO" id="GO:0005829">
    <property type="term" value="C:cytosol"/>
    <property type="evidence" value="ECO:0007669"/>
    <property type="project" value="TreeGrafter"/>
</dbReference>
<dbReference type="GO" id="GO:0005525">
    <property type="term" value="F:GTP binding"/>
    <property type="evidence" value="ECO:0007669"/>
    <property type="project" value="UniProtKB-UniRule"/>
</dbReference>
<dbReference type="GO" id="GO:0046872">
    <property type="term" value="F:metal ion binding"/>
    <property type="evidence" value="ECO:0007669"/>
    <property type="project" value="UniProtKB-KW"/>
</dbReference>
<dbReference type="GO" id="GO:0000917">
    <property type="term" value="P:division septum assembly"/>
    <property type="evidence" value="ECO:0007669"/>
    <property type="project" value="UniProtKB-KW"/>
</dbReference>
<dbReference type="CDD" id="cd01876">
    <property type="entry name" value="YihA_EngB"/>
    <property type="match status" value="1"/>
</dbReference>
<dbReference type="FunFam" id="3.40.50.300:FF:000098">
    <property type="entry name" value="Probable GTP-binding protein EngB"/>
    <property type="match status" value="1"/>
</dbReference>
<dbReference type="Gene3D" id="3.40.50.300">
    <property type="entry name" value="P-loop containing nucleotide triphosphate hydrolases"/>
    <property type="match status" value="1"/>
</dbReference>
<dbReference type="HAMAP" id="MF_00321">
    <property type="entry name" value="GTPase_EngB"/>
    <property type="match status" value="1"/>
</dbReference>
<dbReference type="InterPro" id="IPR030393">
    <property type="entry name" value="G_ENGB_dom"/>
</dbReference>
<dbReference type="InterPro" id="IPR006073">
    <property type="entry name" value="GTP-bd"/>
</dbReference>
<dbReference type="InterPro" id="IPR019987">
    <property type="entry name" value="GTP-bd_ribosome_bio_YsxC"/>
</dbReference>
<dbReference type="InterPro" id="IPR027417">
    <property type="entry name" value="P-loop_NTPase"/>
</dbReference>
<dbReference type="NCBIfam" id="TIGR03598">
    <property type="entry name" value="GTPase_YsxC"/>
    <property type="match status" value="1"/>
</dbReference>
<dbReference type="PANTHER" id="PTHR11649:SF13">
    <property type="entry name" value="ENGB-TYPE G DOMAIN-CONTAINING PROTEIN"/>
    <property type="match status" value="1"/>
</dbReference>
<dbReference type="PANTHER" id="PTHR11649">
    <property type="entry name" value="MSS1/TRME-RELATED GTP-BINDING PROTEIN"/>
    <property type="match status" value="1"/>
</dbReference>
<dbReference type="Pfam" id="PF01926">
    <property type="entry name" value="MMR_HSR1"/>
    <property type="match status" value="1"/>
</dbReference>
<dbReference type="SUPFAM" id="SSF52540">
    <property type="entry name" value="P-loop containing nucleoside triphosphate hydrolases"/>
    <property type="match status" value="1"/>
</dbReference>
<dbReference type="PROSITE" id="PS51706">
    <property type="entry name" value="G_ENGB"/>
    <property type="match status" value="1"/>
</dbReference>
<organism>
    <name type="scientific">Shouchella clausii (strain KSM-K16)</name>
    <name type="common">Alkalihalobacillus clausii</name>
    <dbReference type="NCBI Taxonomy" id="66692"/>
    <lineage>
        <taxon>Bacteria</taxon>
        <taxon>Bacillati</taxon>
        <taxon>Bacillota</taxon>
        <taxon>Bacilli</taxon>
        <taxon>Bacillales</taxon>
        <taxon>Bacillaceae</taxon>
        <taxon>Shouchella</taxon>
    </lineage>
</organism>
<evidence type="ECO:0000255" key="1">
    <source>
        <dbReference type="HAMAP-Rule" id="MF_00321"/>
    </source>
</evidence>
<keyword id="KW-0131">Cell cycle</keyword>
<keyword id="KW-0132">Cell division</keyword>
<keyword id="KW-0342">GTP-binding</keyword>
<keyword id="KW-0460">Magnesium</keyword>
<keyword id="KW-0479">Metal-binding</keyword>
<keyword id="KW-0547">Nucleotide-binding</keyword>
<keyword id="KW-1185">Reference proteome</keyword>
<keyword id="KW-0717">Septation</keyword>